<comment type="catalytic activity">
    <reaction evidence="1">
        <text>L-citrulline + L-aspartate + ATP = 2-(N(omega)-L-arginino)succinate + AMP + diphosphate + H(+)</text>
        <dbReference type="Rhea" id="RHEA:10932"/>
        <dbReference type="ChEBI" id="CHEBI:15378"/>
        <dbReference type="ChEBI" id="CHEBI:29991"/>
        <dbReference type="ChEBI" id="CHEBI:30616"/>
        <dbReference type="ChEBI" id="CHEBI:33019"/>
        <dbReference type="ChEBI" id="CHEBI:57472"/>
        <dbReference type="ChEBI" id="CHEBI:57743"/>
        <dbReference type="ChEBI" id="CHEBI:456215"/>
        <dbReference type="EC" id="6.3.4.5"/>
    </reaction>
</comment>
<comment type="pathway">
    <text evidence="1">Amino-acid biosynthesis; L-arginine biosynthesis; L-arginine from L-ornithine and carbamoyl phosphate: step 2/3.</text>
</comment>
<comment type="subunit">
    <text evidence="1">Homotetramer.</text>
</comment>
<comment type="subcellular location">
    <subcellularLocation>
        <location evidence="1">Cytoplasm</location>
    </subcellularLocation>
</comment>
<comment type="similarity">
    <text evidence="1">Belongs to the argininosuccinate synthase family. Type 1 subfamily.</text>
</comment>
<proteinExistence type="inferred from homology"/>
<organism>
    <name type="scientific">Anoxybacillus flavithermus (strain DSM 21510 / WK1)</name>
    <dbReference type="NCBI Taxonomy" id="491915"/>
    <lineage>
        <taxon>Bacteria</taxon>
        <taxon>Bacillati</taxon>
        <taxon>Bacillota</taxon>
        <taxon>Bacilli</taxon>
        <taxon>Bacillales</taxon>
        <taxon>Anoxybacillaceae</taxon>
        <taxon>Anoxybacillus</taxon>
    </lineage>
</organism>
<dbReference type="EC" id="6.3.4.5" evidence="1"/>
<dbReference type="EMBL" id="CP000922">
    <property type="protein sequence ID" value="ACJ32866.1"/>
    <property type="molecule type" value="Genomic_DNA"/>
</dbReference>
<dbReference type="RefSeq" id="WP_012574187.1">
    <property type="nucleotide sequence ID" value="NC_011567.1"/>
</dbReference>
<dbReference type="SMR" id="B7GGR4"/>
<dbReference type="STRING" id="491915.Aflv_0482"/>
<dbReference type="GeneID" id="7036739"/>
<dbReference type="KEGG" id="afl:Aflv_0482"/>
<dbReference type="PATRIC" id="fig|491915.6.peg.494"/>
<dbReference type="eggNOG" id="COG0137">
    <property type="taxonomic scope" value="Bacteria"/>
</dbReference>
<dbReference type="HOGENOM" id="CLU_032784_4_2_9"/>
<dbReference type="UniPathway" id="UPA00068">
    <property type="reaction ID" value="UER00113"/>
</dbReference>
<dbReference type="Proteomes" id="UP000000742">
    <property type="component" value="Chromosome"/>
</dbReference>
<dbReference type="GO" id="GO:0005737">
    <property type="term" value="C:cytoplasm"/>
    <property type="evidence" value="ECO:0007669"/>
    <property type="project" value="UniProtKB-SubCell"/>
</dbReference>
<dbReference type="GO" id="GO:0004055">
    <property type="term" value="F:argininosuccinate synthase activity"/>
    <property type="evidence" value="ECO:0007669"/>
    <property type="project" value="UniProtKB-UniRule"/>
</dbReference>
<dbReference type="GO" id="GO:0005524">
    <property type="term" value="F:ATP binding"/>
    <property type="evidence" value="ECO:0007669"/>
    <property type="project" value="UniProtKB-UniRule"/>
</dbReference>
<dbReference type="GO" id="GO:0000053">
    <property type="term" value="P:argininosuccinate metabolic process"/>
    <property type="evidence" value="ECO:0007669"/>
    <property type="project" value="TreeGrafter"/>
</dbReference>
<dbReference type="GO" id="GO:0006526">
    <property type="term" value="P:L-arginine biosynthetic process"/>
    <property type="evidence" value="ECO:0007669"/>
    <property type="project" value="UniProtKB-UniRule"/>
</dbReference>
<dbReference type="GO" id="GO:0000050">
    <property type="term" value="P:urea cycle"/>
    <property type="evidence" value="ECO:0007669"/>
    <property type="project" value="TreeGrafter"/>
</dbReference>
<dbReference type="CDD" id="cd01999">
    <property type="entry name" value="ASS"/>
    <property type="match status" value="1"/>
</dbReference>
<dbReference type="FunFam" id="1.20.5.470:FF:000002">
    <property type="entry name" value="Argininosuccinate synthase"/>
    <property type="match status" value="1"/>
</dbReference>
<dbReference type="FunFam" id="3.40.50.620:FF:000038">
    <property type="entry name" value="Argininosuccinate synthase"/>
    <property type="match status" value="1"/>
</dbReference>
<dbReference type="FunFam" id="3.90.1260.10:FF:000007">
    <property type="entry name" value="Argininosuccinate synthase"/>
    <property type="match status" value="1"/>
</dbReference>
<dbReference type="Gene3D" id="3.90.1260.10">
    <property type="entry name" value="Argininosuccinate synthetase, chain A, domain 2"/>
    <property type="match status" value="1"/>
</dbReference>
<dbReference type="Gene3D" id="3.40.50.620">
    <property type="entry name" value="HUPs"/>
    <property type="match status" value="1"/>
</dbReference>
<dbReference type="Gene3D" id="1.20.5.470">
    <property type="entry name" value="Single helix bin"/>
    <property type="match status" value="1"/>
</dbReference>
<dbReference type="HAMAP" id="MF_00005">
    <property type="entry name" value="Arg_succ_synth_type1"/>
    <property type="match status" value="1"/>
</dbReference>
<dbReference type="InterPro" id="IPR048268">
    <property type="entry name" value="Arginosuc_syn_C"/>
</dbReference>
<dbReference type="InterPro" id="IPR048267">
    <property type="entry name" value="Arginosuc_syn_N"/>
</dbReference>
<dbReference type="InterPro" id="IPR001518">
    <property type="entry name" value="Arginosuc_synth"/>
</dbReference>
<dbReference type="InterPro" id="IPR018223">
    <property type="entry name" value="Arginosuc_synth_CS"/>
</dbReference>
<dbReference type="InterPro" id="IPR023434">
    <property type="entry name" value="Arginosuc_synth_type_1_subfam"/>
</dbReference>
<dbReference type="InterPro" id="IPR024074">
    <property type="entry name" value="AS_cat/multimer_dom_body"/>
</dbReference>
<dbReference type="InterPro" id="IPR014729">
    <property type="entry name" value="Rossmann-like_a/b/a_fold"/>
</dbReference>
<dbReference type="NCBIfam" id="TIGR00032">
    <property type="entry name" value="argG"/>
    <property type="match status" value="1"/>
</dbReference>
<dbReference type="NCBIfam" id="NF001770">
    <property type="entry name" value="PRK00509.1"/>
    <property type="match status" value="1"/>
</dbReference>
<dbReference type="PANTHER" id="PTHR11587">
    <property type="entry name" value="ARGININOSUCCINATE SYNTHASE"/>
    <property type="match status" value="1"/>
</dbReference>
<dbReference type="PANTHER" id="PTHR11587:SF2">
    <property type="entry name" value="ARGININOSUCCINATE SYNTHASE"/>
    <property type="match status" value="1"/>
</dbReference>
<dbReference type="Pfam" id="PF20979">
    <property type="entry name" value="Arginosuc_syn_C"/>
    <property type="match status" value="1"/>
</dbReference>
<dbReference type="Pfam" id="PF00764">
    <property type="entry name" value="Arginosuc_synth"/>
    <property type="match status" value="1"/>
</dbReference>
<dbReference type="SUPFAM" id="SSF52402">
    <property type="entry name" value="Adenine nucleotide alpha hydrolases-like"/>
    <property type="match status" value="1"/>
</dbReference>
<dbReference type="SUPFAM" id="SSF69864">
    <property type="entry name" value="Argininosuccinate synthetase, C-terminal domain"/>
    <property type="match status" value="1"/>
</dbReference>
<dbReference type="PROSITE" id="PS00564">
    <property type="entry name" value="ARGININOSUCCIN_SYN_1"/>
    <property type="match status" value="1"/>
</dbReference>
<dbReference type="PROSITE" id="PS00565">
    <property type="entry name" value="ARGININOSUCCIN_SYN_2"/>
    <property type="match status" value="1"/>
</dbReference>
<reference key="1">
    <citation type="journal article" date="2008" name="Genome Biol.">
        <title>Encapsulated in silica: genome, proteome and physiology of the thermophilic bacterium Anoxybacillus flavithermus WK1.</title>
        <authorList>
            <person name="Saw J.H."/>
            <person name="Mountain B.W."/>
            <person name="Feng L."/>
            <person name="Omelchenko M.V."/>
            <person name="Hou S."/>
            <person name="Saito J.A."/>
            <person name="Stott M.B."/>
            <person name="Li D."/>
            <person name="Zhao G."/>
            <person name="Wu J."/>
            <person name="Galperin M.Y."/>
            <person name="Koonin E.V."/>
            <person name="Makarova K.S."/>
            <person name="Wolf Y.I."/>
            <person name="Rigden D.J."/>
            <person name="Dunfield P.F."/>
            <person name="Wang L."/>
            <person name="Alam M."/>
        </authorList>
    </citation>
    <scope>NUCLEOTIDE SEQUENCE [LARGE SCALE GENOMIC DNA]</scope>
    <source>
        <strain>DSM 21510 / WK1</strain>
    </source>
</reference>
<name>ASSY_ANOFW</name>
<keyword id="KW-0028">Amino-acid biosynthesis</keyword>
<keyword id="KW-0055">Arginine biosynthesis</keyword>
<keyword id="KW-0067">ATP-binding</keyword>
<keyword id="KW-0963">Cytoplasm</keyword>
<keyword id="KW-0436">Ligase</keyword>
<keyword id="KW-0547">Nucleotide-binding</keyword>
<sequence length="402" mass="44507">MANPKVVLAYSGGLDTSVAIKWLQEQGYDVVACCLDVGEGKDLEFVKEKALKVGAVKSYMIDAKEEFANEYALIALQAHALYEGKYPLISALSRPLISKKLVEIAELEGAVAVAHGCTGKGNDQVRFEVSIQALNPNLKVIAPVREWKWSREEEIEYAKQHDIPIPIDLDSPFSIDQNLWGRSNECGILEDPWAAPPEEAYELTVALEHTPNEPDIIEIGFEQGIPKTINGKAYSLAELILQLNALAGKHGVGRIDHVENRLVGIKSREVYECPGAMTLIKAHKELEDLTLVKEVAHFKPIIEQKIAEVIYNGLWFSPLKDALVAFLKETQKNVTGVVRVKLFKGHAIVEGRKSPFSLYDEKLATYTAEDEFDHQAAVGFISLFGLPTKVYSIVNGEKKVSV</sequence>
<protein>
    <recommendedName>
        <fullName evidence="1">Argininosuccinate synthase</fullName>
        <ecNumber evidence="1">6.3.4.5</ecNumber>
    </recommendedName>
    <alternativeName>
        <fullName evidence="1">Citrulline--aspartate ligase</fullName>
    </alternativeName>
</protein>
<gene>
    <name evidence="1" type="primary">argG</name>
    <name type="ordered locus">Aflv_0482</name>
</gene>
<feature type="chain" id="PRO_1000116184" description="Argininosuccinate synthase">
    <location>
        <begin position="1"/>
        <end position="402"/>
    </location>
</feature>
<feature type="binding site" evidence="1">
    <location>
        <begin position="9"/>
        <end position="17"/>
    </location>
    <ligand>
        <name>ATP</name>
        <dbReference type="ChEBI" id="CHEBI:30616"/>
    </ligand>
</feature>
<feature type="binding site" evidence="1">
    <location>
        <position position="86"/>
    </location>
    <ligand>
        <name>L-citrulline</name>
        <dbReference type="ChEBI" id="CHEBI:57743"/>
    </ligand>
</feature>
<feature type="binding site" evidence="1">
    <location>
        <position position="116"/>
    </location>
    <ligand>
        <name>ATP</name>
        <dbReference type="ChEBI" id="CHEBI:30616"/>
    </ligand>
</feature>
<feature type="binding site" evidence="1">
    <location>
        <position position="118"/>
    </location>
    <ligand>
        <name>L-aspartate</name>
        <dbReference type="ChEBI" id="CHEBI:29991"/>
    </ligand>
</feature>
<feature type="binding site" evidence="1">
    <location>
        <position position="122"/>
    </location>
    <ligand>
        <name>L-aspartate</name>
        <dbReference type="ChEBI" id="CHEBI:29991"/>
    </ligand>
</feature>
<feature type="binding site" evidence="1">
    <location>
        <position position="122"/>
    </location>
    <ligand>
        <name>L-citrulline</name>
        <dbReference type="ChEBI" id="CHEBI:57743"/>
    </ligand>
</feature>
<feature type="binding site" evidence="1">
    <location>
        <position position="123"/>
    </location>
    <ligand>
        <name>L-aspartate</name>
        <dbReference type="ChEBI" id="CHEBI:29991"/>
    </ligand>
</feature>
<feature type="binding site" evidence="1">
    <location>
        <position position="126"/>
    </location>
    <ligand>
        <name>L-citrulline</name>
        <dbReference type="ChEBI" id="CHEBI:57743"/>
    </ligand>
</feature>
<feature type="binding site" evidence="1">
    <location>
        <position position="174"/>
    </location>
    <ligand>
        <name>L-citrulline</name>
        <dbReference type="ChEBI" id="CHEBI:57743"/>
    </ligand>
</feature>
<feature type="binding site" evidence="1">
    <location>
        <position position="183"/>
    </location>
    <ligand>
        <name>L-citrulline</name>
        <dbReference type="ChEBI" id="CHEBI:57743"/>
    </ligand>
</feature>
<feature type="binding site" evidence="1">
    <location>
        <position position="259"/>
    </location>
    <ligand>
        <name>L-citrulline</name>
        <dbReference type="ChEBI" id="CHEBI:57743"/>
    </ligand>
</feature>
<feature type="binding site" evidence="1">
    <location>
        <position position="271"/>
    </location>
    <ligand>
        <name>L-citrulline</name>
        <dbReference type="ChEBI" id="CHEBI:57743"/>
    </ligand>
</feature>
<evidence type="ECO:0000255" key="1">
    <source>
        <dbReference type="HAMAP-Rule" id="MF_00005"/>
    </source>
</evidence>
<accession>B7GGR4</accession>